<gene>
    <name evidence="1" type="primary">rpoC2</name>
    <name type="ordered locus">GuabCp010</name>
</gene>
<comment type="function">
    <text evidence="1">DNA-dependent RNA polymerase catalyzes the transcription of DNA into RNA using the four ribonucleoside triphosphates as substrates.</text>
</comment>
<comment type="catalytic activity">
    <reaction evidence="1">
        <text>RNA(n) + a ribonucleoside 5'-triphosphate = RNA(n+1) + diphosphate</text>
        <dbReference type="Rhea" id="RHEA:21248"/>
        <dbReference type="Rhea" id="RHEA-COMP:14527"/>
        <dbReference type="Rhea" id="RHEA-COMP:17342"/>
        <dbReference type="ChEBI" id="CHEBI:33019"/>
        <dbReference type="ChEBI" id="CHEBI:61557"/>
        <dbReference type="ChEBI" id="CHEBI:140395"/>
        <dbReference type="EC" id="2.7.7.6"/>
    </reaction>
</comment>
<comment type="cofactor">
    <cofactor evidence="1">
        <name>Zn(2+)</name>
        <dbReference type="ChEBI" id="CHEBI:29105"/>
    </cofactor>
    <text evidence="1">Binds 1 Zn(2+) ion per subunit.</text>
</comment>
<comment type="subunit">
    <text evidence="1">In plastids the minimal PEP RNA polymerase catalytic core is composed of four subunits: alpha, beta, beta', and beta''. When a (nuclear-encoded) sigma factor is associated with the core the holoenzyme is formed, which can initiate transcription.</text>
</comment>
<comment type="subcellular location">
    <subcellularLocation>
        <location evidence="1">Plastid</location>
        <location evidence="1">Chloroplast</location>
    </subcellularLocation>
</comment>
<comment type="similarity">
    <text evidence="1">Belongs to the RNA polymerase beta' chain family. RpoC2 subfamily.</text>
</comment>
<evidence type="ECO:0000255" key="1">
    <source>
        <dbReference type="HAMAP-Rule" id="MF_01324"/>
    </source>
</evidence>
<accession>B2LMI2</accession>
<proteinExistence type="inferred from homology"/>
<keyword id="KW-0150">Chloroplast</keyword>
<keyword id="KW-0240">DNA-directed RNA polymerase</keyword>
<keyword id="KW-0479">Metal-binding</keyword>
<keyword id="KW-0548">Nucleotidyltransferase</keyword>
<keyword id="KW-0934">Plastid</keyword>
<keyword id="KW-0804">Transcription</keyword>
<keyword id="KW-0808">Transferase</keyword>
<keyword id="KW-0862">Zinc</keyword>
<protein>
    <recommendedName>
        <fullName evidence="1">DNA-directed RNA polymerase subunit beta''</fullName>
        <ecNumber evidence="1">2.7.7.6</ecNumber>
    </recommendedName>
    <alternativeName>
        <fullName evidence="1">PEP</fullName>
    </alternativeName>
    <alternativeName>
        <fullName evidence="1">Plastid-encoded RNA polymerase subunit beta''</fullName>
        <shortName evidence="1">RNA polymerase subunit beta''</shortName>
    </alternativeName>
</protein>
<sequence>MEVLMAERPTQVFHNKVIDGTAMKRLISRFIDHYGIGYTSHILDQVKTLGFRQATAASISLGIDDLLTIPSKRWLVQDAEQQSFILEKHHHYGNVHAVEKLRQSIEIWYATSEYLRQEMTPNFRMTDPFNPVHIMSFSGARGNASQVHQLVGMRGLMSDPQGQMIDLPIQSNLREGLSLTEYIISCYGARKGVVDTAIRTSDAGYLTRRLVEVVQHIVVRRTDCGTVRGISVSPRNGMMADRIFIQTLIGRVLADDIYIGSRCIATRNQDIGVGLVNRFITFRAQPISIRTPFTCRSTSWICQLCYGRSPAHDDLVELGEAVGIIAGQSIGEPGTQLTLRTFHTGGVFTGGTAEHVRAPSNGKIKFNEDLVHPTRTRHGHPAFLCSRDLYVTIESEDIIHNVCIPPKSFLLVQNDQYVESEQVIAEIRARTSTLNLKEKVRKHIYSDSEGEMHWNTDVYHAPEFTYGNIHLLPKTSHLWILLGEPWRSSLGPCSIHKDQDQMNAYSLSVKRRYISNPSVTNNQVRHKFFSSYFSGKNQKGDRIPDYSELNRMTCTGRCNLRYPGILDGNSDLLAKRRRNRVIIPLDSIQEGENQLIPSSGISIEIPRNGILRRNSILAYFDDPRYIRKSSGLTKYETRELNSIVNEEDLIEYRGVKVFWPKYQKEVNPFFFIPVEIHILAESSSIMVRHNSIIGVDTQITLNRRSRVGGLVRVKKKAEKIKLIIFSGDIHFPEKTNKAFRLIPPGGGKKNSKEYKKLKNWLYIQRMKLSRYEKKYFVLVQPVVPYKKTDGINLGRLFPADLLQESDNLQLRVVNYILYYDPILEIWDTSIQLVRTCLVLNWDQDKKIEKACASFVEIRTNGLIRDFLRIDLAKSPISYTGKRNDLPGSGLIYENGSDRANVNPFSSIYSSSKARIQESLNPNQGTIHTLLNRNKESQSLIILSSSNCSRIGPFNDVKSPNVIKESIKKDPLIPIRNSLGPLGTGFPISNFDLFSHLITHNKILVTNYLQLDNLKHIFQILKYYLLDENGKIYNPYSCSNIILNPFNLNWYFLHYNYCEETSTIVSLGQFLCENVCIAKKGPHLKSGQVLILQVDSVVIRSAKPYLATPGATVHGHYGEILYEGDTLVTFIYEKSRSGDITQGLPKVEQVLEVRSIDSISMNLEKRIEGWNKCITRILGIPWAFFIGAELTIVQSRISLVNKVQKVYRSQGVQIHNRHIEIIVRQITSKVLVSEDEMSNVFSPGELIGLLRAERMGRALEEAICYQAVLLGITRASMNTQSFISEASFQETARVLAKAALLGRIDWLKGLKENVVLGGMIPVGSGFKTPSSEPNNIPNNIAFELKKENLLEGEMKDILFYHRKFFDSCLSKNFHDTQEQSFF</sequence>
<geneLocation type="chloroplast"/>
<dbReference type="EC" id="2.7.7.6" evidence="1"/>
<dbReference type="EMBL" id="EU549769">
    <property type="protein sequence ID" value="ACB86516.1"/>
    <property type="molecule type" value="Genomic_DNA"/>
</dbReference>
<dbReference type="RefSeq" id="YP_001837349.1">
    <property type="nucleotide sequence ID" value="NC_010601.1"/>
</dbReference>
<dbReference type="SMR" id="B2LMI2"/>
<dbReference type="GeneID" id="6219084"/>
<dbReference type="GO" id="GO:0009507">
    <property type="term" value="C:chloroplast"/>
    <property type="evidence" value="ECO:0007669"/>
    <property type="project" value="UniProtKB-SubCell"/>
</dbReference>
<dbReference type="GO" id="GO:0000428">
    <property type="term" value="C:DNA-directed RNA polymerase complex"/>
    <property type="evidence" value="ECO:0007669"/>
    <property type="project" value="UniProtKB-KW"/>
</dbReference>
<dbReference type="GO" id="GO:0005739">
    <property type="term" value="C:mitochondrion"/>
    <property type="evidence" value="ECO:0007669"/>
    <property type="project" value="GOC"/>
</dbReference>
<dbReference type="GO" id="GO:0003677">
    <property type="term" value="F:DNA binding"/>
    <property type="evidence" value="ECO:0007669"/>
    <property type="project" value="UniProtKB-UniRule"/>
</dbReference>
<dbReference type="GO" id="GO:0003899">
    <property type="term" value="F:DNA-directed RNA polymerase activity"/>
    <property type="evidence" value="ECO:0007669"/>
    <property type="project" value="UniProtKB-UniRule"/>
</dbReference>
<dbReference type="GO" id="GO:0008270">
    <property type="term" value="F:zinc ion binding"/>
    <property type="evidence" value="ECO:0007669"/>
    <property type="project" value="UniProtKB-UniRule"/>
</dbReference>
<dbReference type="GO" id="GO:0006351">
    <property type="term" value="P:DNA-templated transcription"/>
    <property type="evidence" value="ECO:0007669"/>
    <property type="project" value="UniProtKB-UniRule"/>
</dbReference>
<dbReference type="CDD" id="cd02655">
    <property type="entry name" value="RNAP_beta'_C"/>
    <property type="match status" value="1"/>
</dbReference>
<dbReference type="FunFam" id="1.10.132.30:FF:000002">
    <property type="entry name" value="DNA-directed RNA polymerase subunit beta"/>
    <property type="match status" value="1"/>
</dbReference>
<dbReference type="Gene3D" id="1.10.132.30">
    <property type="match status" value="1"/>
</dbReference>
<dbReference type="Gene3D" id="1.10.150.390">
    <property type="match status" value="1"/>
</dbReference>
<dbReference type="Gene3D" id="1.10.1790.20">
    <property type="match status" value="1"/>
</dbReference>
<dbReference type="Gene3D" id="1.10.274.100">
    <property type="entry name" value="RNA polymerase Rpb1, domain 3"/>
    <property type="match status" value="1"/>
</dbReference>
<dbReference type="HAMAP" id="MF_01324">
    <property type="entry name" value="RNApol_bact_RpoC2"/>
    <property type="match status" value="1"/>
</dbReference>
<dbReference type="InterPro" id="IPR012756">
    <property type="entry name" value="DNA-dir_RpoC2_beta_pp"/>
</dbReference>
<dbReference type="InterPro" id="IPR050254">
    <property type="entry name" value="RNA_pol_beta''_euk"/>
</dbReference>
<dbReference type="InterPro" id="IPR042102">
    <property type="entry name" value="RNA_pol_Rpb1_3_sf"/>
</dbReference>
<dbReference type="InterPro" id="IPR007083">
    <property type="entry name" value="RNA_pol_Rpb1_4"/>
</dbReference>
<dbReference type="InterPro" id="IPR007081">
    <property type="entry name" value="RNA_pol_Rpb1_5"/>
</dbReference>
<dbReference type="InterPro" id="IPR038120">
    <property type="entry name" value="Rpb1_funnel_sf"/>
</dbReference>
<dbReference type="NCBIfam" id="TIGR02388">
    <property type="entry name" value="rpoC2_cyan"/>
    <property type="match status" value="1"/>
</dbReference>
<dbReference type="PANTHER" id="PTHR34995">
    <property type="entry name" value="DNA-DIRECTED RNA POLYMERASE SUBUNIT BETA"/>
    <property type="match status" value="1"/>
</dbReference>
<dbReference type="PANTHER" id="PTHR34995:SF1">
    <property type="entry name" value="DNA-DIRECTED RNA POLYMERASE SUBUNIT BETA"/>
    <property type="match status" value="1"/>
</dbReference>
<dbReference type="Pfam" id="PF05000">
    <property type="entry name" value="RNA_pol_Rpb1_4"/>
    <property type="match status" value="1"/>
</dbReference>
<dbReference type="Pfam" id="PF04998">
    <property type="entry name" value="RNA_pol_Rpb1_5"/>
    <property type="match status" value="2"/>
</dbReference>
<dbReference type="SUPFAM" id="SSF64484">
    <property type="entry name" value="beta and beta-prime subunits of DNA dependent RNA-polymerase"/>
    <property type="match status" value="1"/>
</dbReference>
<feature type="chain" id="PRO_0000353562" description="DNA-directed RNA polymerase subunit beta''">
    <location>
        <begin position="1"/>
        <end position="1381"/>
    </location>
</feature>
<feature type="binding site" evidence="1">
    <location>
        <position position="224"/>
    </location>
    <ligand>
        <name>Zn(2+)</name>
        <dbReference type="ChEBI" id="CHEBI:29105"/>
    </ligand>
</feature>
<feature type="binding site" evidence="1">
    <location>
        <position position="295"/>
    </location>
    <ligand>
        <name>Zn(2+)</name>
        <dbReference type="ChEBI" id="CHEBI:29105"/>
    </ligand>
</feature>
<feature type="binding site" evidence="1">
    <location>
        <position position="302"/>
    </location>
    <ligand>
        <name>Zn(2+)</name>
        <dbReference type="ChEBI" id="CHEBI:29105"/>
    </ligand>
</feature>
<feature type="binding site" evidence="1">
    <location>
        <position position="305"/>
    </location>
    <ligand>
        <name>Zn(2+)</name>
        <dbReference type="ChEBI" id="CHEBI:29105"/>
    </ligand>
</feature>
<reference key="1">
    <citation type="submission" date="2008-03" db="EMBL/GenBank/DDBJ databases">
        <title>Guizotia abyssinica chloroplast sequenced using Solexa.</title>
        <authorList>
            <person name="Kane N.C."/>
            <person name="Dempewolf H."/>
            <person name="Stewart M.L."/>
            <person name="Cronk Q."/>
            <person name="Rieseberrg L.H."/>
        </authorList>
    </citation>
    <scope>NUCLEOTIDE SEQUENCE [LARGE SCALE GENOMIC DNA]</scope>
    <source>
        <strain>cv. PI 508077</strain>
    </source>
</reference>
<organism>
    <name type="scientific">Guizotia abyssinica</name>
    <name type="common">Niger</name>
    <name type="synonym">Ramtilla</name>
    <dbReference type="NCBI Taxonomy" id="4230"/>
    <lineage>
        <taxon>Eukaryota</taxon>
        <taxon>Viridiplantae</taxon>
        <taxon>Streptophyta</taxon>
        <taxon>Embryophyta</taxon>
        <taxon>Tracheophyta</taxon>
        <taxon>Spermatophyta</taxon>
        <taxon>Magnoliopsida</taxon>
        <taxon>eudicotyledons</taxon>
        <taxon>Gunneridae</taxon>
        <taxon>Pentapetalae</taxon>
        <taxon>asterids</taxon>
        <taxon>campanulids</taxon>
        <taxon>Asterales</taxon>
        <taxon>Asteraceae</taxon>
        <taxon>Asteroideae</taxon>
        <taxon>Heliantheae alliance</taxon>
        <taxon>Millerieae</taxon>
        <taxon>Guizotia</taxon>
    </lineage>
</organism>
<name>RPOC2_GUIAB</name>